<evidence type="ECO:0000255" key="1">
    <source>
        <dbReference type="HAMAP-Rule" id="MF_01123"/>
    </source>
</evidence>
<reference key="1">
    <citation type="journal article" date="2010" name="J. Bacteriol.">
        <title>Complete genome sequence of Beijerinckia indica subsp. indica.</title>
        <authorList>
            <person name="Tamas I."/>
            <person name="Dedysh S.N."/>
            <person name="Liesack W."/>
            <person name="Stott M.B."/>
            <person name="Alam M."/>
            <person name="Murrell J.C."/>
            <person name="Dunfield P.F."/>
        </authorList>
    </citation>
    <scope>NUCLEOTIDE SEQUENCE [LARGE SCALE GENOMIC DNA]</scope>
    <source>
        <strain>ATCC 9039 / DSM 1715 / NCIMB 8712</strain>
    </source>
</reference>
<gene>
    <name evidence="1" type="primary">acsA</name>
    <name type="ordered locus">Bind_0053</name>
</gene>
<organism>
    <name type="scientific">Beijerinckia indica subsp. indica (strain ATCC 9039 / DSM 1715 / NCIMB 8712)</name>
    <dbReference type="NCBI Taxonomy" id="395963"/>
    <lineage>
        <taxon>Bacteria</taxon>
        <taxon>Pseudomonadati</taxon>
        <taxon>Pseudomonadota</taxon>
        <taxon>Alphaproteobacteria</taxon>
        <taxon>Hyphomicrobiales</taxon>
        <taxon>Beijerinckiaceae</taxon>
        <taxon>Beijerinckia</taxon>
    </lineage>
</organism>
<name>ACSA_BEII9</name>
<sequence>MSDKTYPVSAYWNERAYINAAKYKDMYKRSIEEPDLFWGEEGKRIDWIKPYTKVKNTSFDPANVDIRWFEDGITNVAYNCIDRHLATRGDQTAILFEGDDPADSRAITYKELHDSVCRLANVLKAHGVGKGDTVSLYLPMIPEAAFAMLACARIGAIHSVIFGGFSPDSLAGRIEGCRSKVLITADEGLRGGRKVPLKANADLAIAKTGDIVQTMIVVTRTGGAVDWVEGRDVRYEEAIAAASPECPLTEVEAEHPLFILYTSGSTGAPKGVVHCTGGYLVYASMTHQYVFDYHDGDVYWCTADVGWVTGHSYIVYGPLANGATTLMFEGVPNYPSVSRFWEVIDKHKVTIFYTAPTAIRALMGSGEAPVKKTSRASLRLLGSVGEPINPEAWEWYHRVVGEERCPIVDTWWQTETGGILITPLPGATPEKPGSATLPFFGVKPQVVDATGAVLEGVCEGNLVIADSWPGQMRTIFGDHDRFVQSYFSTYPGKYFTGDGCRRDADGYYWITGRVDDVINVSGHRLGTAEVESSLVAHELVSEAAVVGYPHDIKGQGIYAYVTLMNGIEPSDRLRTELVTWVRKDIGPIATPDVVHFATGLPKTRSGKIMRRILRKIAEKEFSALGDVSTLADPTIVDDLIRNRLG</sequence>
<keyword id="KW-0007">Acetylation</keyword>
<keyword id="KW-0067">ATP-binding</keyword>
<keyword id="KW-0436">Ligase</keyword>
<keyword id="KW-0460">Magnesium</keyword>
<keyword id="KW-0479">Metal-binding</keyword>
<keyword id="KW-0547">Nucleotide-binding</keyword>
<keyword id="KW-1185">Reference proteome</keyword>
<accession>B2IB12</accession>
<feature type="chain" id="PRO_1000137259" description="Acetyl-coenzyme A synthetase">
    <location>
        <begin position="1"/>
        <end position="645"/>
    </location>
</feature>
<feature type="binding site" evidence="1">
    <location>
        <begin position="190"/>
        <end position="193"/>
    </location>
    <ligand>
        <name>CoA</name>
        <dbReference type="ChEBI" id="CHEBI:57287"/>
    </ligand>
</feature>
<feature type="binding site" evidence="1">
    <location>
        <position position="309"/>
    </location>
    <ligand>
        <name>CoA</name>
        <dbReference type="ChEBI" id="CHEBI:57287"/>
    </ligand>
</feature>
<feature type="binding site" evidence="1">
    <location>
        <position position="333"/>
    </location>
    <ligand>
        <name>CoA</name>
        <dbReference type="ChEBI" id="CHEBI:57287"/>
    </ligand>
</feature>
<feature type="binding site" evidence="1">
    <location>
        <begin position="385"/>
        <end position="387"/>
    </location>
    <ligand>
        <name>ATP</name>
        <dbReference type="ChEBI" id="CHEBI:30616"/>
    </ligand>
</feature>
<feature type="binding site" evidence="1">
    <location>
        <begin position="409"/>
        <end position="414"/>
    </location>
    <ligand>
        <name>ATP</name>
        <dbReference type="ChEBI" id="CHEBI:30616"/>
    </ligand>
</feature>
<feature type="binding site" evidence="1">
    <location>
        <position position="498"/>
    </location>
    <ligand>
        <name>ATP</name>
        <dbReference type="ChEBI" id="CHEBI:30616"/>
    </ligand>
</feature>
<feature type="binding site" evidence="1">
    <location>
        <position position="513"/>
    </location>
    <ligand>
        <name>ATP</name>
        <dbReference type="ChEBI" id="CHEBI:30616"/>
    </ligand>
</feature>
<feature type="binding site" evidence="1">
    <location>
        <position position="521"/>
    </location>
    <ligand>
        <name>CoA</name>
        <dbReference type="ChEBI" id="CHEBI:57287"/>
    </ligand>
</feature>
<feature type="binding site" evidence="1">
    <location>
        <position position="524"/>
    </location>
    <ligand>
        <name>ATP</name>
        <dbReference type="ChEBI" id="CHEBI:30616"/>
    </ligand>
</feature>
<feature type="binding site" evidence="1">
    <location>
        <position position="535"/>
    </location>
    <ligand>
        <name>Mg(2+)</name>
        <dbReference type="ChEBI" id="CHEBI:18420"/>
    </ligand>
</feature>
<feature type="binding site" evidence="1">
    <location>
        <position position="537"/>
    </location>
    <ligand>
        <name>Mg(2+)</name>
        <dbReference type="ChEBI" id="CHEBI:18420"/>
    </ligand>
</feature>
<feature type="binding site" evidence="1">
    <location>
        <position position="540"/>
    </location>
    <ligand>
        <name>Mg(2+)</name>
        <dbReference type="ChEBI" id="CHEBI:18420"/>
    </ligand>
</feature>
<feature type="binding site">
    <location>
        <position position="582"/>
    </location>
    <ligand>
        <name>CoA</name>
        <dbReference type="ChEBI" id="CHEBI:57287"/>
    </ligand>
</feature>
<feature type="modified residue" description="N6-acetyllysine" evidence="1">
    <location>
        <position position="607"/>
    </location>
</feature>
<protein>
    <recommendedName>
        <fullName evidence="1">Acetyl-coenzyme A synthetase</fullName>
        <shortName evidence="1">AcCoA synthetase</shortName>
        <shortName evidence="1">Acs</shortName>
        <ecNumber evidence="1">6.2.1.1</ecNumber>
    </recommendedName>
    <alternativeName>
        <fullName evidence="1">Acetate--CoA ligase</fullName>
    </alternativeName>
    <alternativeName>
        <fullName evidence="1">Acyl-activating enzyme</fullName>
    </alternativeName>
</protein>
<proteinExistence type="inferred from homology"/>
<dbReference type="EC" id="6.2.1.1" evidence="1"/>
<dbReference type="EMBL" id="CP001016">
    <property type="protein sequence ID" value="ACB93712.1"/>
    <property type="molecule type" value="Genomic_DNA"/>
</dbReference>
<dbReference type="RefSeq" id="WP_012383070.1">
    <property type="nucleotide sequence ID" value="NC_010581.1"/>
</dbReference>
<dbReference type="SMR" id="B2IB12"/>
<dbReference type="STRING" id="395963.Bind_0053"/>
<dbReference type="KEGG" id="bid:Bind_0053"/>
<dbReference type="eggNOG" id="COG0365">
    <property type="taxonomic scope" value="Bacteria"/>
</dbReference>
<dbReference type="HOGENOM" id="CLU_000022_3_6_5"/>
<dbReference type="OrthoDB" id="9803968at2"/>
<dbReference type="Proteomes" id="UP000001695">
    <property type="component" value="Chromosome"/>
</dbReference>
<dbReference type="GO" id="GO:0005829">
    <property type="term" value="C:cytosol"/>
    <property type="evidence" value="ECO:0007669"/>
    <property type="project" value="TreeGrafter"/>
</dbReference>
<dbReference type="GO" id="GO:0003987">
    <property type="term" value="F:acetate-CoA ligase activity"/>
    <property type="evidence" value="ECO:0007669"/>
    <property type="project" value="UniProtKB-UniRule"/>
</dbReference>
<dbReference type="GO" id="GO:0016208">
    <property type="term" value="F:AMP binding"/>
    <property type="evidence" value="ECO:0007669"/>
    <property type="project" value="InterPro"/>
</dbReference>
<dbReference type="GO" id="GO:0005524">
    <property type="term" value="F:ATP binding"/>
    <property type="evidence" value="ECO:0007669"/>
    <property type="project" value="UniProtKB-KW"/>
</dbReference>
<dbReference type="GO" id="GO:0046872">
    <property type="term" value="F:metal ion binding"/>
    <property type="evidence" value="ECO:0007669"/>
    <property type="project" value="UniProtKB-KW"/>
</dbReference>
<dbReference type="GO" id="GO:0019427">
    <property type="term" value="P:acetyl-CoA biosynthetic process from acetate"/>
    <property type="evidence" value="ECO:0007669"/>
    <property type="project" value="InterPro"/>
</dbReference>
<dbReference type="CDD" id="cd05966">
    <property type="entry name" value="ACS"/>
    <property type="match status" value="1"/>
</dbReference>
<dbReference type="FunFam" id="3.30.300.30:FF:000004">
    <property type="entry name" value="Acetyl-coenzyme A synthetase"/>
    <property type="match status" value="1"/>
</dbReference>
<dbReference type="FunFam" id="3.40.50.12780:FF:000001">
    <property type="entry name" value="Acetyl-coenzyme A synthetase"/>
    <property type="match status" value="1"/>
</dbReference>
<dbReference type="Gene3D" id="3.30.300.30">
    <property type="match status" value="1"/>
</dbReference>
<dbReference type="Gene3D" id="3.40.50.12780">
    <property type="entry name" value="N-terminal domain of ligase-like"/>
    <property type="match status" value="1"/>
</dbReference>
<dbReference type="HAMAP" id="MF_01123">
    <property type="entry name" value="Ac_CoA_synth"/>
    <property type="match status" value="1"/>
</dbReference>
<dbReference type="InterPro" id="IPR011904">
    <property type="entry name" value="Ac_CoA_lig"/>
</dbReference>
<dbReference type="InterPro" id="IPR032387">
    <property type="entry name" value="ACAS_N"/>
</dbReference>
<dbReference type="InterPro" id="IPR025110">
    <property type="entry name" value="AMP-bd_C"/>
</dbReference>
<dbReference type="InterPro" id="IPR045851">
    <property type="entry name" value="AMP-bd_C_sf"/>
</dbReference>
<dbReference type="InterPro" id="IPR020845">
    <property type="entry name" value="AMP-binding_CS"/>
</dbReference>
<dbReference type="InterPro" id="IPR000873">
    <property type="entry name" value="AMP-dep_synth/lig_dom"/>
</dbReference>
<dbReference type="InterPro" id="IPR042099">
    <property type="entry name" value="ANL_N_sf"/>
</dbReference>
<dbReference type="NCBIfam" id="TIGR02188">
    <property type="entry name" value="Ac_CoA_lig_AcsA"/>
    <property type="match status" value="1"/>
</dbReference>
<dbReference type="NCBIfam" id="NF001208">
    <property type="entry name" value="PRK00174.1"/>
    <property type="match status" value="1"/>
</dbReference>
<dbReference type="PANTHER" id="PTHR24095">
    <property type="entry name" value="ACETYL-COENZYME A SYNTHETASE"/>
    <property type="match status" value="1"/>
</dbReference>
<dbReference type="PANTHER" id="PTHR24095:SF14">
    <property type="entry name" value="ACETYL-COENZYME A SYNTHETASE 1"/>
    <property type="match status" value="1"/>
</dbReference>
<dbReference type="Pfam" id="PF16177">
    <property type="entry name" value="ACAS_N"/>
    <property type="match status" value="1"/>
</dbReference>
<dbReference type="Pfam" id="PF00501">
    <property type="entry name" value="AMP-binding"/>
    <property type="match status" value="1"/>
</dbReference>
<dbReference type="Pfam" id="PF13193">
    <property type="entry name" value="AMP-binding_C"/>
    <property type="match status" value="1"/>
</dbReference>
<dbReference type="SUPFAM" id="SSF56801">
    <property type="entry name" value="Acetyl-CoA synthetase-like"/>
    <property type="match status" value="1"/>
</dbReference>
<dbReference type="PROSITE" id="PS00455">
    <property type="entry name" value="AMP_BINDING"/>
    <property type="match status" value="1"/>
</dbReference>
<comment type="function">
    <text evidence="1">Catalyzes the conversion of acetate into acetyl-CoA (AcCoA), an essential intermediate at the junction of anabolic and catabolic pathways. AcsA undergoes a two-step reaction. In the first half reaction, AcsA combines acetate with ATP to form acetyl-adenylate (AcAMP) intermediate. In the second half reaction, it can then transfer the acetyl group from AcAMP to the sulfhydryl group of CoA, forming the product AcCoA.</text>
</comment>
<comment type="catalytic activity">
    <reaction evidence="1">
        <text>acetate + ATP + CoA = acetyl-CoA + AMP + diphosphate</text>
        <dbReference type="Rhea" id="RHEA:23176"/>
        <dbReference type="ChEBI" id="CHEBI:30089"/>
        <dbReference type="ChEBI" id="CHEBI:30616"/>
        <dbReference type="ChEBI" id="CHEBI:33019"/>
        <dbReference type="ChEBI" id="CHEBI:57287"/>
        <dbReference type="ChEBI" id="CHEBI:57288"/>
        <dbReference type="ChEBI" id="CHEBI:456215"/>
        <dbReference type="EC" id="6.2.1.1"/>
    </reaction>
</comment>
<comment type="cofactor">
    <cofactor evidence="1">
        <name>Mg(2+)</name>
        <dbReference type="ChEBI" id="CHEBI:18420"/>
    </cofactor>
</comment>
<comment type="PTM">
    <text evidence="1">Acetylated. Deacetylation by the SIR2-homolog deacetylase activates the enzyme.</text>
</comment>
<comment type="similarity">
    <text evidence="1">Belongs to the ATP-dependent AMP-binding enzyme family.</text>
</comment>